<gene>
    <name evidence="1" type="primary">dtd</name>
    <name type="ordered locus">YPA_3513</name>
</gene>
<feature type="chain" id="PRO_0000259331" description="D-aminoacyl-tRNA deacylase">
    <location>
        <begin position="1"/>
        <end position="145"/>
    </location>
</feature>
<feature type="short sequence motif" description="Gly-cisPro motif, important for rejection of L-amino acids" evidence="1">
    <location>
        <begin position="137"/>
        <end position="138"/>
    </location>
</feature>
<proteinExistence type="inferred from homology"/>
<accession>Q1C247</accession>
<name>DTD_YERPA</name>
<dbReference type="EC" id="3.1.1.96" evidence="1"/>
<dbReference type="EMBL" id="CP000308">
    <property type="protein sequence ID" value="ABG15475.1"/>
    <property type="molecule type" value="Genomic_DNA"/>
</dbReference>
<dbReference type="RefSeq" id="WP_002209009.1">
    <property type="nucleotide sequence ID" value="NZ_CP009906.1"/>
</dbReference>
<dbReference type="SMR" id="Q1C247"/>
<dbReference type="GeneID" id="57974561"/>
<dbReference type="KEGG" id="ypa:YPA_3513"/>
<dbReference type="Proteomes" id="UP000001971">
    <property type="component" value="Chromosome"/>
</dbReference>
<dbReference type="GO" id="GO:0005737">
    <property type="term" value="C:cytoplasm"/>
    <property type="evidence" value="ECO:0007669"/>
    <property type="project" value="UniProtKB-SubCell"/>
</dbReference>
<dbReference type="GO" id="GO:0051500">
    <property type="term" value="F:D-tyrosyl-tRNA(Tyr) deacylase activity"/>
    <property type="evidence" value="ECO:0007669"/>
    <property type="project" value="TreeGrafter"/>
</dbReference>
<dbReference type="GO" id="GO:0106026">
    <property type="term" value="F:Gly-tRNA(Ala) deacylase activity"/>
    <property type="evidence" value="ECO:0007669"/>
    <property type="project" value="UniProtKB-UniRule"/>
</dbReference>
<dbReference type="GO" id="GO:0043908">
    <property type="term" value="F:Ser(Gly)-tRNA(Ala) hydrolase activity"/>
    <property type="evidence" value="ECO:0007669"/>
    <property type="project" value="UniProtKB-UniRule"/>
</dbReference>
<dbReference type="GO" id="GO:0000049">
    <property type="term" value="F:tRNA binding"/>
    <property type="evidence" value="ECO:0007669"/>
    <property type="project" value="UniProtKB-UniRule"/>
</dbReference>
<dbReference type="GO" id="GO:0019478">
    <property type="term" value="P:D-amino acid catabolic process"/>
    <property type="evidence" value="ECO:0007669"/>
    <property type="project" value="UniProtKB-UniRule"/>
</dbReference>
<dbReference type="CDD" id="cd00563">
    <property type="entry name" value="Dtyr_deacylase"/>
    <property type="match status" value="1"/>
</dbReference>
<dbReference type="FunFam" id="3.50.80.10:FF:000001">
    <property type="entry name" value="D-aminoacyl-tRNA deacylase"/>
    <property type="match status" value="1"/>
</dbReference>
<dbReference type="Gene3D" id="3.50.80.10">
    <property type="entry name" value="D-tyrosyl-tRNA(Tyr) deacylase"/>
    <property type="match status" value="1"/>
</dbReference>
<dbReference type="HAMAP" id="MF_00518">
    <property type="entry name" value="Deacylase_Dtd"/>
    <property type="match status" value="1"/>
</dbReference>
<dbReference type="InterPro" id="IPR003732">
    <property type="entry name" value="Daa-tRNA_deacyls_DTD"/>
</dbReference>
<dbReference type="InterPro" id="IPR023509">
    <property type="entry name" value="DTD-like_sf"/>
</dbReference>
<dbReference type="NCBIfam" id="TIGR00256">
    <property type="entry name" value="D-aminoacyl-tRNA deacylase"/>
    <property type="match status" value="1"/>
</dbReference>
<dbReference type="PANTHER" id="PTHR10472:SF5">
    <property type="entry name" value="D-AMINOACYL-TRNA DEACYLASE 1"/>
    <property type="match status" value="1"/>
</dbReference>
<dbReference type="PANTHER" id="PTHR10472">
    <property type="entry name" value="D-TYROSYL-TRNA TYR DEACYLASE"/>
    <property type="match status" value="1"/>
</dbReference>
<dbReference type="Pfam" id="PF02580">
    <property type="entry name" value="Tyr_Deacylase"/>
    <property type="match status" value="1"/>
</dbReference>
<dbReference type="SUPFAM" id="SSF69500">
    <property type="entry name" value="DTD-like"/>
    <property type="match status" value="1"/>
</dbReference>
<reference key="1">
    <citation type="journal article" date="2006" name="J. Bacteriol.">
        <title>Complete genome sequence of Yersinia pestis strains Antiqua and Nepal516: evidence of gene reduction in an emerging pathogen.</title>
        <authorList>
            <person name="Chain P.S.G."/>
            <person name="Hu P."/>
            <person name="Malfatti S.A."/>
            <person name="Radnedge L."/>
            <person name="Larimer F."/>
            <person name="Vergez L.M."/>
            <person name="Worsham P."/>
            <person name="Chu M.C."/>
            <person name="Andersen G.L."/>
        </authorList>
    </citation>
    <scope>NUCLEOTIDE SEQUENCE [LARGE SCALE GENOMIC DNA]</scope>
    <source>
        <strain>Antiqua</strain>
    </source>
</reference>
<sequence length="145" mass="15863">MIALIQRALSASVVVEGNIVGEIGPGLLVLLGVEQGDTEQKAQRLCERVLGYRIFSDENDKMNLNVQQAGGSVLVVSQFTLVADTQKGMRPSFSRGAIPQEADRLYQYFVAQCRERGVKTETGLFAADMKVSLVNDGPVTFWLQV</sequence>
<protein>
    <recommendedName>
        <fullName evidence="1">D-aminoacyl-tRNA deacylase</fullName>
        <shortName evidence="1">DTD</shortName>
        <ecNumber evidence="1">3.1.1.96</ecNumber>
    </recommendedName>
    <alternativeName>
        <fullName evidence="1">Gly-tRNA(Ala) deacylase</fullName>
    </alternativeName>
</protein>
<keyword id="KW-0963">Cytoplasm</keyword>
<keyword id="KW-0378">Hydrolase</keyword>
<keyword id="KW-0694">RNA-binding</keyword>
<keyword id="KW-0820">tRNA-binding</keyword>
<organism>
    <name type="scientific">Yersinia pestis bv. Antiqua (strain Antiqua)</name>
    <dbReference type="NCBI Taxonomy" id="360102"/>
    <lineage>
        <taxon>Bacteria</taxon>
        <taxon>Pseudomonadati</taxon>
        <taxon>Pseudomonadota</taxon>
        <taxon>Gammaproteobacteria</taxon>
        <taxon>Enterobacterales</taxon>
        <taxon>Yersiniaceae</taxon>
        <taxon>Yersinia</taxon>
    </lineage>
</organism>
<evidence type="ECO:0000255" key="1">
    <source>
        <dbReference type="HAMAP-Rule" id="MF_00518"/>
    </source>
</evidence>
<comment type="function">
    <text evidence="1">An aminoacyl-tRNA editing enzyme that deacylates mischarged D-aminoacyl-tRNAs. Also deacylates mischarged glycyl-tRNA(Ala), protecting cells against glycine mischarging by AlaRS. Acts via tRNA-based rather than protein-based catalysis; rejects L-amino acids rather than detecting D-amino acids in the active site. By recycling D-aminoacyl-tRNA to D-amino acids and free tRNA molecules, this enzyme counteracts the toxicity associated with the formation of D-aminoacyl-tRNA entities in vivo and helps enforce protein L-homochirality.</text>
</comment>
<comment type="catalytic activity">
    <reaction evidence="1">
        <text>glycyl-tRNA(Ala) + H2O = tRNA(Ala) + glycine + H(+)</text>
        <dbReference type="Rhea" id="RHEA:53744"/>
        <dbReference type="Rhea" id="RHEA-COMP:9657"/>
        <dbReference type="Rhea" id="RHEA-COMP:13640"/>
        <dbReference type="ChEBI" id="CHEBI:15377"/>
        <dbReference type="ChEBI" id="CHEBI:15378"/>
        <dbReference type="ChEBI" id="CHEBI:57305"/>
        <dbReference type="ChEBI" id="CHEBI:78442"/>
        <dbReference type="ChEBI" id="CHEBI:78522"/>
        <dbReference type="EC" id="3.1.1.96"/>
    </reaction>
</comment>
<comment type="catalytic activity">
    <reaction evidence="1">
        <text>a D-aminoacyl-tRNA + H2O = a tRNA + a D-alpha-amino acid + H(+)</text>
        <dbReference type="Rhea" id="RHEA:13953"/>
        <dbReference type="Rhea" id="RHEA-COMP:10123"/>
        <dbReference type="Rhea" id="RHEA-COMP:10124"/>
        <dbReference type="ChEBI" id="CHEBI:15377"/>
        <dbReference type="ChEBI" id="CHEBI:15378"/>
        <dbReference type="ChEBI" id="CHEBI:59871"/>
        <dbReference type="ChEBI" id="CHEBI:78442"/>
        <dbReference type="ChEBI" id="CHEBI:79333"/>
        <dbReference type="EC" id="3.1.1.96"/>
    </reaction>
</comment>
<comment type="subunit">
    <text evidence="1">Homodimer.</text>
</comment>
<comment type="subcellular location">
    <subcellularLocation>
        <location evidence="1">Cytoplasm</location>
    </subcellularLocation>
</comment>
<comment type="domain">
    <text evidence="1">A Gly-cisPro motif from one monomer fits into the active site of the other monomer to allow specific chiral rejection of L-amino acids.</text>
</comment>
<comment type="similarity">
    <text evidence="1">Belongs to the DTD family.</text>
</comment>